<name>YHIT_BUCAI</name>
<accession>P57438</accession>
<evidence type="ECO:0000255" key="1">
    <source>
        <dbReference type="PROSITE-ProRule" id="PRU00464"/>
    </source>
</evidence>
<gene>
    <name type="ordered locus">BU357</name>
</gene>
<feature type="chain" id="PRO_0000109812" description="Uncharacterized HIT-like protein BU357">
    <location>
        <begin position="1"/>
        <end position="114"/>
    </location>
</feature>
<feature type="domain" description="HIT" evidence="1">
    <location>
        <begin position="6"/>
        <end position="114"/>
    </location>
</feature>
<organism>
    <name type="scientific">Buchnera aphidicola subsp. Acyrthosiphon pisum (strain APS)</name>
    <name type="common">Acyrthosiphon pisum symbiotic bacterium</name>
    <dbReference type="NCBI Taxonomy" id="107806"/>
    <lineage>
        <taxon>Bacteria</taxon>
        <taxon>Pseudomonadati</taxon>
        <taxon>Pseudomonadota</taxon>
        <taxon>Gammaproteobacteria</taxon>
        <taxon>Enterobacterales</taxon>
        <taxon>Erwiniaceae</taxon>
        <taxon>Buchnera</taxon>
    </lineage>
</organism>
<keyword id="KW-1185">Reference proteome</keyword>
<protein>
    <recommendedName>
        <fullName>Uncharacterized HIT-like protein BU357</fullName>
    </recommendedName>
</protein>
<sequence>MQDNSIFKNIIQRKIPANIVYQDKKITAFEDIKPKAPVHILIIPNFFISSSNDINKKNKWIMSHMFYIAVKIAKQKKINQEGYRIIINCNEYGGQEINYLHMHLLGGKKLKSFS</sequence>
<dbReference type="EMBL" id="BA000003">
    <property type="protein sequence ID" value="BAB13061.1"/>
    <property type="molecule type" value="Genomic_DNA"/>
</dbReference>
<dbReference type="RefSeq" id="NP_240175.1">
    <property type="nucleotide sequence ID" value="NC_002528.1"/>
</dbReference>
<dbReference type="RefSeq" id="WP_009874313.1">
    <property type="nucleotide sequence ID" value="NZ_AP036055.1"/>
</dbReference>
<dbReference type="SMR" id="P57438"/>
<dbReference type="STRING" id="563178.BUAP5A_350"/>
<dbReference type="EnsemblBacteria" id="BAB13061">
    <property type="protein sequence ID" value="BAB13061"/>
    <property type="gene ID" value="BAB13061"/>
</dbReference>
<dbReference type="KEGG" id="buc:BU357"/>
<dbReference type="PATRIC" id="fig|107806.10.peg.370"/>
<dbReference type="eggNOG" id="COG0537">
    <property type="taxonomic scope" value="Bacteria"/>
</dbReference>
<dbReference type="HOGENOM" id="CLU_056776_8_1_6"/>
<dbReference type="BioCyc" id="BAPH107806:GBZJ-350-MONOMER"/>
<dbReference type="Proteomes" id="UP000001806">
    <property type="component" value="Chromosome"/>
</dbReference>
<dbReference type="GO" id="GO:0003824">
    <property type="term" value="F:catalytic activity"/>
    <property type="evidence" value="ECO:0007669"/>
    <property type="project" value="InterPro"/>
</dbReference>
<dbReference type="CDD" id="cd01276">
    <property type="entry name" value="PKCI_related"/>
    <property type="match status" value="1"/>
</dbReference>
<dbReference type="Gene3D" id="3.30.428.10">
    <property type="entry name" value="HIT-like"/>
    <property type="match status" value="1"/>
</dbReference>
<dbReference type="InterPro" id="IPR019808">
    <property type="entry name" value="Histidine_triad_CS"/>
</dbReference>
<dbReference type="InterPro" id="IPR001310">
    <property type="entry name" value="Histidine_triad_HIT"/>
</dbReference>
<dbReference type="InterPro" id="IPR011146">
    <property type="entry name" value="HIT-like"/>
</dbReference>
<dbReference type="InterPro" id="IPR036265">
    <property type="entry name" value="HIT-like_sf"/>
</dbReference>
<dbReference type="PANTHER" id="PTHR23089">
    <property type="entry name" value="HISTIDINE TRIAD HIT PROTEIN"/>
    <property type="match status" value="1"/>
</dbReference>
<dbReference type="Pfam" id="PF01230">
    <property type="entry name" value="HIT"/>
    <property type="match status" value="1"/>
</dbReference>
<dbReference type="PRINTS" id="PR00332">
    <property type="entry name" value="HISTRIAD"/>
</dbReference>
<dbReference type="SUPFAM" id="SSF54197">
    <property type="entry name" value="HIT-like"/>
    <property type="match status" value="1"/>
</dbReference>
<dbReference type="PROSITE" id="PS00892">
    <property type="entry name" value="HIT_1"/>
    <property type="match status" value="1"/>
</dbReference>
<dbReference type="PROSITE" id="PS51084">
    <property type="entry name" value="HIT_2"/>
    <property type="match status" value="1"/>
</dbReference>
<proteinExistence type="predicted"/>
<reference key="1">
    <citation type="journal article" date="2000" name="Nature">
        <title>Genome sequence of the endocellular bacterial symbiont of aphids Buchnera sp. APS.</title>
        <authorList>
            <person name="Shigenobu S."/>
            <person name="Watanabe H."/>
            <person name="Hattori M."/>
            <person name="Sakaki Y."/>
            <person name="Ishikawa H."/>
        </authorList>
    </citation>
    <scope>NUCLEOTIDE SEQUENCE [LARGE SCALE GENOMIC DNA]</scope>
    <source>
        <strain>APS</strain>
    </source>
</reference>